<feature type="chain" id="PRO_0000148261" description="Phosphoribosylformylglycinamidine cyclo-ligase">
    <location>
        <begin position="1"/>
        <end position="340"/>
    </location>
</feature>
<keyword id="KW-0067">ATP-binding</keyword>
<keyword id="KW-0963">Cytoplasm</keyword>
<keyword id="KW-0436">Ligase</keyword>
<keyword id="KW-0547">Nucleotide-binding</keyword>
<keyword id="KW-0658">Purine biosynthesis</keyword>
<keyword id="KW-1185">Reference proteome</keyword>
<evidence type="ECO:0000255" key="1">
    <source>
        <dbReference type="HAMAP-Rule" id="MF_00741"/>
    </source>
</evidence>
<protein>
    <recommendedName>
        <fullName evidence="1">Phosphoribosylformylglycinamidine cyclo-ligase</fullName>
        <ecNumber evidence="1">6.3.3.1</ecNumber>
    </recommendedName>
    <alternativeName>
        <fullName evidence="1">AIR synthase</fullName>
    </alternativeName>
    <alternativeName>
        <fullName evidence="1">AIRS</fullName>
    </alternativeName>
    <alternativeName>
        <fullName evidence="1">Phosphoribosyl-aminoimidazole synthetase</fullName>
    </alternativeName>
</protein>
<gene>
    <name evidence="1" type="primary">purM</name>
    <name type="ordered locus">SPy_0027</name>
    <name type="ordered locus">M5005_Spy0025</name>
</gene>
<dbReference type="EC" id="6.3.3.1" evidence="1"/>
<dbReference type="EMBL" id="AE004092">
    <property type="protein sequence ID" value="AAK33166.1"/>
    <property type="molecule type" value="Genomic_DNA"/>
</dbReference>
<dbReference type="EMBL" id="CP000017">
    <property type="protein sequence ID" value="AAZ50644.1"/>
    <property type="molecule type" value="Genomic_DNA"/>
</dbReference>
<dbReference type="RefSeq" id="NP_268444.1">
    <property type="nucleotide sequence ID" value="NC_002737.2"/>
</dbReference>
<dbReference type="SMR" id="Q9A1Z0"/>
<dbReference type="PaxDb" id="1314-HKU360_00057"/>
<dbReference type="KEGG" id="spy:SPy_0027"/>
<dbReference type="KEGG" id="spz:M5005_Spy0025"/>
<dbReference type="PATRIC" id="fig|160490.10.peg.26"/>
<dbReference type="HOGENOM" id="CLU_047116_0_0_9"/>
<dbReference type="OMA" id="MTDYICV"/>
<dbReference type="UniPathway" id="UPA00074">
    <property type="reaction ID" value="UER00129"/>
</dbReference>
<dbReference type="Proteomes" id="UP000000750">
    <property type="component" value="Chromosome"/>
</dbReference>
<dbReference type="GO" id="GO:0005829">
    <property type="term" value="C:cytosol"/>
    <property type="evidence" value="ECO:0007669"/>
    <property type="project" value="TreeGrafter"/>
</dbReference>
<dbReference type="GO" id="GO:0005524">
    <property type="term" value="F:ATP binding"/>
    <property type="evidence" value="ECO:0007669"/>
    <property type="project" value="UniProtKB-KW"/>
</dbReference>
<dbReference type="GO" id="GO:0004637">
    <property type="term" value="F:phosphoribosylamine-glycine ligase activity"/>
    <property type="evidence" value="ECO:0007669"/>
    <property type="project" value="TreeGrafter"/>
</dbReference>
<dbReference type="GO" id="GO:0004641">
    <property type="term" value="F:phosphoribosylformylglycinamidine cyclo-ligase activity"/>
    <property type="evidence" value="ECO:0007669"/>
    <property type="project" value="UniProtKB-UniRule"/>
</dbReference>
<dbReference type="GO" id="GO:0006189">
    <property type="term" value="P:'de novo' IMP biosynthetic process"/>
    <property type="evidence" value="ECO:0007669"/>
    <property type="project" value="UniProtKB-UniRule"/>
</dbReference>
<dbReference type="GO" id="GO:0046084">
    <property type="term" value="P:adenine biosynthetic process"/>
    <property type="evidence" value="ECO:0007669"/>
    <property type="project" value="TreeGrafter"/>
</dbReference>
<dbReference type="CDD" id="cd02196">
    <property type="entry name" value="PurM"/>
    <property type="match status" value="1"/>
</dbReference>
<dbReference type="FunFam" id="3.30.1330.10:FF:000001">
    <property type="entry name" value="Phosphoribosylformylglycinamidine cyclo-ligase"/>
    <property type="match status" value="1"/>
</dbReference>
<dbReference type="FunFam" id="3.90.650.10:FF:000011">
    <property type="entry name" value="Phosphoribosylformylglycinamidine cyclo-ligase"/>
    <property type="match status" value="1"/>
</dbReference>
<dbReference type="Gene3D" id="3.90.650.10">
    <property type="entry name" value="PurM-like C-terminal domain"/>
    <property type="match status" value="1"/>
</dbReference>
<dbReference type="Gene3D" id="3.30.1330.10">
    <property type="entry name" value="PurM-like, N-terminal domain"/>
    <property type="match status" value="1"/>
</dbReference>
<dbReference type="HAMAP" id="MF_00741">
    <property type="entry name" value="AIRS"/>
    <property type="match status" value="1"/>
</dbReference>
<dbReference type="InterPro" id="IPR010918">
    <property type="entry name" value="PurM-like_C_dom"/>
</dbReference>
<dbReference type="InterPro" id="IPR036676">
    <property type="entry name" value="PurM-like_C_sf"/>
</dbReference>
<dbReference type="InterPro" id="IPR016188">
    <property type="entry name" value="PurM-like_N"/>
</dbReference>
<dbReference type="InterPro" id="IPR036921">
    <property type="entry name" value="PurM-like_N_sf"/>
</dbReference>
<dbReference type="InterPro" id="IPR004733">
    <property type="entry name" value="PurM_cligase"/>
</dbReference>
<dbReference type="NCBIfam" id="TIGR00878">
    <property type="entry name" value="purM"/>
    <property type="match status" value="1"/>
</dbReference>
<dbReference type="PANTHER" id="PTHR10520:SF12">
    <property type="entry name" value="TRIFUNCTIONAL PURINE BIOSYNTHETIC PROTEIN ADENOSINE-3"/>
    <property type="match status" value="1"/>
</dbReference>
<dbReference type="PANTHER" id="PTHR10520">
    <property type="entry name" value="TRIFUNCTIONAL PURINE BIOSYNTHETIC PROTEIN ADENOSINE-3-RELATED"/>
    <property type="match status" value="1"/>
</dbReference>
<dbReference type="Pfam" id="PF00586">
    <property type="entry name" value="AIRS"/>
    <property type="match status" value="1"/>
</dbReference>
<dbReference type="Pfam" id="PF02769">
    <property type="entry name" value="AIRS_C"/>
    <property type="match status" value="1"/>
</dbReference>
<dbReference type="SUPFAM" id="SSF56042">
    <property type="entry name" value="PurM C-terminal domain-like"/>
    <property type="match status" value="1"/>
</dbReference>
<dbReference type="SUPFAM" id="SSF55326">
    <property type="entry name" value="PurM N-terminal domain-like"/>
    <property type="match status" value="1"/>
</dbReference>
<accession>Q9A1Z0</accession>
<accession>Q491S4</accession>
<reference key="1">
    <citation type="journal article" date="2001" name="Proc. Natl. Acad. Sci. U.S.A.">
        <title>Complete genome sequence of an M1 strain of Streptococcus pyogenes.</title>
        <authorList>
            <person name="Ferretti J.J."/>
            <person name="McShan W.M."/>
            <person name="Ajdic D.J."/>
            <person name="Savic D.J."/>
            <person name="Savic G."/>
            <person name="Lyon K."/>
            <person name="Primeaux C."/>
            <person name="Sezate S."/>
            <person name="Suvorov A.N."/>
            <person name="Kenton S."/>
            <person name="Lai H.S."/>
            <person name="Lin S.P."/>
            <person name="Qian Y."/>
            <person name="Jia H.G."/>
            <person name="Najar F.Z."/>
            <person name="Ren Q."/>
            <person name="Zhu H."/>
            <person name="Song L."/>
            <person name="White J."/>
            <person name="Yuan X."/>
            <person name="Clifton S.W."/>
            <person name="Roe B.A."/>
            <person name="McLaughlin R.E."/>
        </authorList>
    </citation>
    <scope>NUCLEOTIDE SEQUENCE [LARGE SCALE GENOMIC DNA]</scope>
    <source>
        <strain>ATCC 700294 / SF370 / Serotype M1</strain>
    </source>
</reference>
<reference key="2">
    <citation type="journal article" date="2005" name="J. Infect. Dis.">
        <title>Evolutionary origin and emergence of a highly successful clone of serotype M1 group A Streptococcus involved multiple horizontal gene transfer events.</title>
        <authorList>
            <person name="Sumby P."/>
            <person name="Porcella S.F."/>
            <person name="Madrigal A.G."/>
            <person name="Barbian K.D."/>
            <person name="Virtaneva K."/>
            <person name="Ricklefs S.M."/>
            <person name="Sturdevant D.E."/>
            <person name="Graham M.R."/>
            <person name="Vuopio-Varkila J."/>
            <person name="Hoe N.P."/>
            <person name="Musser J.M."/>
        </authorList>
    </citation>
    <scope>NUCLEOTIDE SEQUENCE [LARGE SCALE GENOMIC DNA]</scope>
    <source>
        <strain>ATCC BAA-947 / MGAS5005 / Serotype M1</strain>
    </source>
</reference>
<comment type="catalytic activity">
    <reaction evidence="1">
        <text>2-formamido-N(1)-(5-O-phospho-beta-D-ribosyl)acetamidine + ATP = 5-amino-1-(5-phospho-beta-D-ribosyl)imidazole + ADP + phosphate + H(+)</text>
        <dbReference type="Rhea" id="RHEA:23032"/>
        <dbReference type="ChEBI" id="CHEBI:15378"/>
        <dbReference type="ChEBI" id="CHEBI:30616"/>
        <dbReference type="ChEBI" id="CHEBI:43474"/>
        <dbReference type="ChEBI" id="CHEBI:137981"/>
        <dbReference type="ChEBI" id="CHEBI:147287"/>
        <dbReference type="ChEBI" id="CHEBI:456216"/>
        <dbReference type="EC" id="6.3.3.1"/>
    </reaction>
</comment>
<comment type="pathway">
    <text evidence="1">Purine metabolism; IMP biosynthesis via de novo pathway; 5-amino-1-(5-phospho-D-ribosyl)imidazole from N(2)-formyl-N(1)-(5-phospho-D-ribosyl)glycinamide: step 2/2.</text>
</comment>
<comment type="subcellular location">
    <subcellularLocation>
        <location evidence="1">Cytoplasm</location>
    </subcellularLocation>
</comment>
<comment type="similarity">
    <text evidence="1">Belongs to the AIR synthase family.</text>
</comment>
<organism>
    <name type="scientific">Streptococcus pyogenes serotype M1</name>
    <dbReference type="NCBI Taxonomy" id="301447"/>
    <lineage>
        <taxon>Bacteria</taxon>
        <taxon>Bacillati</taxon>
        <taxon>Bacillota</taxon>
        <taxon>Bacilli</taxon>
        <taxon>Lactobacillales</taxon>
        <taxon>Streptococcaceae</taxon>
        <taxon>Streptococcus</taxon>
    </lineage>
</organism>
<sequence>MSEKNAYAKSGVDVEAGYEVVERIKKHVARTERAGVMGALGGFGGMFDLSKTGVKEPVLVSGTDGVGTKLMLAIKYDKHDTIGQDCVAMCVNDIIAAGAEPLYFLDYIATGKNNPVKLEEVVSGVAEGCVQAGAALIGGETAEMPGMYGQDDYDLAGFAVGVAEKSQIIDGSKVKEGDILLGLASSGIHSNGYSLVRRVFADYTGKELLPELEGKQLKDVLLEPTRIYVKAALPLIKEELVKGIGHITGGGFIENIPRMFADDLAAEIDEDKVPVLPIFKALEKYGDIKHEEMFEIFNMGVGLMLAVSPENVNRVKELLDEPVYEIGRIIKKADASVVIK</sequence>
<proteinExistence type="inferred from homology"/>
<name>PUR5_STRP1</name>